<protein>
    <recommendedName>
        <fullName evidence="1">Enolase</fullName>
        <ecNumber evidence="1">4.2.1.11</ecNumber>
    </recommendedName>
    <alternativeName>
        <fullName evidence="1">2-phospho-D-glycerate hydro-lyase</fullName>
    </alternativeName>
    <alternativeName>
        <fullName evidence="1">2-phosphoglycerate dehydratase</fullName>
    </alternativeName>
</protein>
<evidence type="ECO:0000255" key="1">
    <source>
        <dbReference type="HAMAP-Rule" id="MF_00318"/>
    </source>
</evidence>
<evidence type="ECO:0000269" key="2">
    <source>
    </source>
</evidence>
<gene>
    <name evidence="1" type="primary">eno</name>
    <name type="ordered locus">spr1036</name>
</gene>
<name>ENO_STRR6</name>
<comment type="function">
    <text evidence="1">Catalyzes the reversible conversion of 2-phosphoglycerate (2-PG) into phosphoenolpyruvate (PEP). It is essential for the degradation of carbohydrates via glycolysis.</text>
</comment>
<comment type="catalytic activity">
    <reaction evidence="1">
        <text>(2R)-2-phosphoglycerate = phosphoenolpyruvate + H2O</text>
        <dbReference type="Rhea" id="RHEA:10164"/>
        <dbReference type="ChEBI" id="CHEBI:15377"/>
        <dbReference type="ChEBI" id="CHEBI:58289"/>
        <dbReference type="ChEBI" id="CHEBI:58702"/>
        <dbReference type="EC" id="4.2.1.11"/>
    </reaction>
</comment>
<comment type="cofactor">
    <cofactor evidence="1">
        <name>Mg(2+)</name>
        <dbReference type="ChEBI" id="CHEBI:18420"/>
    </cofactor>
    <text evidence="1">Binds a second Mg(2+) ion via substrate during catalysis.</text>
</comment>
<comment type="pathway">
    <text evidence="1">Carbohydrate degradation; glycolysis; pyruvate from D-glyceraldehyde 3-phosphate: step 4/5.</text>
</comment>
<comment type="subcellular location">
    <subcellularLocation>
        <location evidence="1">Cytoplasm</location>
    </subcellularLocation>
    <subcellularLocation>
        <location evidence="1">Secreted</location>
    </subcellularLocation>
    <subcellularLocation>
        <location evidence="1">Cell surface</location>
    </subcellularLocation>
    <text evidence="1">Fractions of enolase are present in both the cytoplasm and on the cell surface.</text>
</comment>
<comment type="PTM">
    <text evidence="2">Phosphorylated on Thr residue(s). This phosphorylation is not StkP-dependent.</text>
</comment>
<comment type="similarity">
    <text evidence="1">Belongs to the enolase family.</text>
</comment>
<reference key="1">
    <citation type="journal article" date="2001" name="J. Bacteriol.">
        <title>Genome of the bacterium Streptococcus pneumoniae strain R6.</title>
        <authorList>
            <person name="Hoskins J."/>
            <person name="Alborn W.E. Jr."/>
            <person name="Arnold J."/>
            <person name="Blaszczak L.C."/>
            <person name="Burgett S."/>
            <person name="DeHoff B.S."/>
            <person name="Estrem S.T."/>
            <person name="Fritz L."/>
            <person name="Fu D.-J."/>
            <person name="Fuller W."/>
            <person name="Geringer C."/>
            <person name="Gilmour R."/>
            <person name="Glass J.S."/>
            <person name="Khoja H."/>
            <person name="Kraft A.R."/>
            <person name="Lagace R.E."/>
            <person name="LeBlanc D.J."/>
            <person name="Lee L.N."/>
            <person name="Lefkowitz E.J."/>
            <person name="Lu J."/>
            <person name="Matsushima P."/>
            <person name="McAhren S.M."/>
            <person name="McHenney M."/>
            <person name="McLeaster K."/>
            <person name="Mundy C.W."/>
            <person name="Nicas T.I."/>
            <person name="Norris F.H."/>
            <person name="O'Gara M."/>
            <person name="Peery R.B."/>
            <person name="Robertson G.T."/>
            <person name="Rockey P."/>
            <person name="Sun P.-M."/>
            <person name="Winkler M.E."/>
            <person name="Yang Y."/>
            <person name="Young-Bellido M."/>
            <person name="Zhao G."/>
            <person name="Zook C.A."/>
            <person name="Baltz R.H."/>
            <person name="Jaskunas S.R."/>
            <person name="Rosteck P.R. Jr."/>
            <person name="Skatrud P.L."/>
            <person name="Glass J.I."/>
        </authorList>
    </citation>
    <scope>NUCLEOTIDE SEQUENCE [LARGE SCALE GENOMIC DNA]</scope>
    <source>
        <strain>ATCC BAA-255 / R6</strain>
    </source>
</reference>
<reference key="2">
    <citation type="journal article" date="2010" name="J. Bacteriol.">
        <title>Identification of multiple substrates of the StkP Ser/Thr protein kinase in Streptococcus pneumoniae.</title>
        <authorList>
            <person name="Novakova L."/>
            <person name="Bezouskova S."/>
            <person name="Pompach P."/>
            <person name="Spidlova P."/>
            <person name="Saskova L."/>
            <person name="Weiser J."/>
            <person name="Branny P."/>
        </authorList>
    </citation>
    <scope>PHOSPHORYLATION</scope>
    <scope>IDENTIFICATION BY MASS SPECTROMETRY</scope>
</reference>
<organism>
    <name type="scientific">Streptococcus pneumoniae (strain ATCC BAA-255 / R6)</name>
    <dbReference type="NCBI Taxonomy" id="171101"/>
    <lineage>
        <taxon>Bacteria</taxon>
        <taxon>Bacillati</taxon>
        <taxon>Bacillota</taxon>
        <taxon>Bacilli</taxon>
        <taxon>Lactobacillales</taxon>
        <taxon>Streptococcaceae</taxon>
        <taxon>Streptococcus</taxon>
    </lineage>
</organism>
<accession>Q8DPS0</accession>
<keyword id="KW-0963">Cytoplasm</keyword>
<keyword id="KW-0324">Glycolysis</keyword>
<keyword id="KW-0456">Lyase</keyword>
<keyword id="KW-0460">Magnesium</keyword>
<keyword id="KW-0479">Metal-binding</keyword>
<keyword id="KW-1185">Reference proteome</keyword>
<keyword id="KW-0964">Secreted</keyword>
<keyword id="KW-0843">Virulence</keyword>
<feature type="chain" id="PRO_0000133981" description="Enolase">
    <location>
        <begin position="1"/>
        <end position="434"/>
    </location>
</feature>
<feature type="active site" description="Proton donor" evidence="1">
    <location>
        <position position="205"/>
    </location>
</feature>
<feature type="active site" description="Proton acceptor" evidence="1">
    <location>
        <position position="343"/>
    </location>
</feature>
<feature type="binding site" evidence="1">
    <location>
        <position position="163"/>
    </location>
    <ligand>
        <name>(2R)-2-phosphoglycerate</name>
        <dbReference type="ChEBI" id="CHEBI:58289"/>
    </ligand>
</feature>
<feature type="binding site" evidence="1">
    <location>
        <position position="242"/>
    </location>
    <ligand>
        <name>Mg(2+)</name>
        <dbReference type="ChEBI" id="CHEBI:18420"/>
    </ligand>
</feature>
<feature type="binding site" evidence="1">
    <location>
        <position position="291"/>
    </location>
    <ligand>
        <name>Mg(2+)</name>
        <dbReference type="ChEBI" id="CHEBI:18420"/>
    </ligand>
</feature>
<feature type="binding site" evidence="1">
    <location>
        <position position="318"/>
    </location>
    <ligand>
        <name>Mg(2+)</name>
        <dbReference type="ChEBI" id="CHEBI:18420"/>
    </ligand>
</feature>
<feature type="binding site" evidence="1">
    <location>
        <position position="343"/>
    </location>
    <ligand>
        <name>(2R)-2-phosphoglycerate</name>
        <dbReference type="ChEBI" id="CHEBI:58289"/>
    </ligand>
</feature>
<feature type="binding site" evidence="1">
    <location>
        <position position="372"/>
    </location>
    <ligand>
        <name>(2R)-2-phosphoglycerate</name>
        <dbReference type="ChEBI" id="CHEBI:58289"/>
    </ligand>
</feature>
<feature type="binding site" evidence="1">
    <location>
        <position position="373"/>
    </location>
    <ligand>
        <name>(2R)-2-phosphoglycerate</name>
        <dbReference type="ChEBI" id="CHEBI:58289"/>
    </ligand>
</feature>
<feature type="binding site" evidence="1">
    <location>
        <position position="394"/>
    </location>
    <ligand>
        <name>(2R)-2-phosphoglycerate</name>
        <dbReference type="ChEBI" id="CHEBI:58289"/>
    </ligand>
</feature>
<sequence length="434" mass="47103">MSIITDVYAREVLDSRGNPTLEVEVYTESGAFGRGMVPSGASTGEHEAVELRDGDKSRYGGLGTQKAVDNVNNIIAEAIIGYDVRDQQAIDRAMIALDGTPNKGKLGANAILGVSIAVARAAADYLEIPLYSYLGGFNTKVLPTPMMNIINGGSHSDAPIAFQEFMILPVGAPTFKEALRYGAEIFHALKKILKSRGLETAVGDEGGFAPRFEGTEDGVETILAAIEAAGYVPGKDVFLGFDCASSEFYDKERKVYDYTKFEGEGAAVRTSAEQIDYLEELVNKYPIITIEDGMDENDWDGWKALTERLGKKVQLVGDDFFVTNTDYLARGIQEGAANSILIKVNQIGTLTETFEAIEMAKEAGYTAVVSHRSGETEDSTIADIAVATNAGQIKTGSLSRTDRIAKYNQLLRIEDQLGEVAEYRGLKSFYNLKK</sequence>
<proteinExistence type="evidence at protein level"/>
<dbReference type="EC" id="4.2.1.11" evidence="1"/>
<dbReference type="EMBL" id="AE007317">
    <property type="protein sequence ID" value="AAK99840.1"/>
    <property type="molecule type" value="Genomic_DNA"/>
</dbReference>
<dbReference type="PIR" id="D98001">
    <property type="entry name" value="D98001"/>
</dbReference>
<dbReference type="RefSeq" id="NP_358630.1">
    <property type="nucleotide sequence ID" value="NC_003098.1"/>
</dbReference>
<dbReference type="RefSeq" id="WP_000022815.1">
    <property type="nucleotide sequence ID" value="NC_003098.1"/>
</dbReference>
<dbReference type="SMR" id="Q8DPS0"/>
<dbReference type="STRING" id="171101.spr1036"/>
<dbReference type="KEGG" id="spr:spr1036"/>
<dbReference type="PATRIC" id="fig|171101.6.peg.1124"/>
<dbReference type="eggNOG" id="COG0148">
    <property type="taxonomic scope" value="Bacteria"/>
</dbReference>
<dbReference type="HOGENOM" id="CLU_031223_2_1_9"/>
<dbReference type="UniPathway" id="UPA00109">
    <property type="reaction ID" value="UER00187"/>
</dbReference>
<dbReference type="Proteomes" id="UP000000586">
    <property type="component" value="Chromosome"/>
</dbReference>
<dbReference type="GO" id="GO:0009986">
    <property type="term" value="C:cell surface"/>
    <property type="evidence" value="ECO:0007669"/>
    <property type="project" value="UniProtKB-SubCell"/>
</dbReference>
<dbReference type="GO" id="GO:0005576">
    <property type="term" value="C:extracellular region"/>
    <property type="evidence" value="ECO:0007669"/>
    <property type="project" value="UniProtKB-SubCell"/>
</dbReference>
<dbReference type="GO" id="GO:0009274">
    <property type="term" value="C:peptidoglycan-based cell wall"/>
    <property type="evidence" value="ECO:0007669"/>
    <property type="project" value="UniProtKB-ARBA"/>
</dbReference>
<dbReference type="GO" id="GO:0000015">
    <property type="term" value="C:phosphopyruvate hydratase complex"/>
    <property type="evidence" value="ECO:0000318"/>
    <property type="project" value="GO_Central"/>
</dbReference>
<dbReference type="GO" id="GO:0000287">
    <property type="term" value="F:magnesium ion binding"/>
    <property type="evidence" value="ECO:0007669"/>
    <property type="project" value="UniProtKB-UniRule"/>
</dbReference>
<dbReference type="GO" id="GO:0004634">
    <property type="term" value="F:phosphopyruvate hydratase activity"/>
    <property type="evidence" value="ECO:0000318"/>
    <property type="project" value="GO_Central"/>
</dbReference>
<dbReference type="GO" id="GO:0006096">
    <property type="term" value="P:glycolytic process"/>
    <property type="evidence" value="ECO:0000318"/>
    <property type="project" value="GO_Central"/>
</dbReference>
<dbReference type="CDD" id="cd03313">
    <property type="entry name" value="enolase"/>
    <property type="match status" value="1"/>
</dbReference>
<dbReference type="FunFam" id="3.20.20.120:FF:000001">
    <property type="entry name" value="Enolase"/>
    <property type="match status" value="1"/>
</dbReference>
<dbReference type="FunFam" id="3.30.390.10:FF:000001">
    <property type="entry name" value="Enolase"/>
    <property type="match status" value="1"/>
</dbReference>
<dbReference type="Gene3D" id="3.20.20.120">
    <property type="entry name" value="Enolase-like C-terminal domain"/>
    <property type="match status" value="1"/>
</dbReference>
<dbReference type="Gene3D" id="3.30.390.10">
    <property type="entry name" value="Enolase-like, N-terminal domain"/>
    <property type="match status" value="1"/>
</dbReference>
<dbReference type="HAMAP" id="MF_00318">
    <property type="entry name" value="Enolase"/>
    <property type="match status" value="1"/>
</dbReference>
<dbReference type="InterPro" id="IPR000941">
    <property type="entry name" value="Enolase"/>
</dbReference>
<dbReference type="InterPro" id="IPR036849">
    <property type="entry name" value="Enolase-like_C_sf"/>
</dbReference>
<dbReference type="InterPro" id="IPR029017">
    <property type="entry name" value="Enolase-like_N"/>
</dbReference>
<dbReference type="InterPro" id="IPR020810">
    <property type="entry name" value="Enolase_C"/>
</dbReference>
<dbReference type="InterPro" id="IPR020809">
    <property type="entry name" value="Enolase_CS"/>
</dbReference>
<dbReference type="InterPro" id="IPR020811">
    <property type="entry name" value="Enolase_N"/>
</dbReference>
<dbReference type="NCBIfam" id="TIGR01060">
    <property type="entry name" value="eno"/>
    <property type="match status" value="1"/>
</dbReference>
<dbReference type="PANTHER" id="PTHR11902">
    <property type="entry name" value="ENOLASE"/>
    <property type="match status" value="1"/>
</dbReference>
<dbReference type="PANTHER" id="PTHR11902:SF1">
    <property type="entry name" value="ENOLASE"/>
    <property type="match status" value="1"/>
</dbReference>
<dbReference type="Pfam" id="PF00113">
    <property type="entry name" value="Enolase_C"/>
    <property type="match status" value="1"/>
</dbReference>
<dbReference type="Pfam" id="PF03952">
    <property type="entry name" value="Enolase_N"/>
    <property type="match status" value="1"/>
</dbReference>
<dbReference type="PIRSF" id="PIRSF001400">
    <property type="entry name" value="Enolase"/>
    <property type="match status" value="1"/>
</dbReference>
<dbReference type="PRINTS" id="PR00148">
    <property type="entry name" value="ENOLASE"/>
</dbReference>
<dbReference type="SFLD" id="SFLDF00002">
    <property type="entry name" value="enolase"/>
    <property type="match status" value="1"/>
</dbReference>
<dbReference type="SFLD" id="SFLDG00178">
    <property type="entry name" value="enolase"/>
    <property type="match status" value="1"/>
</dbReference>
<dbReference type="SMART" id="SM01192">
    <property type="entry name" value="Enolase_C"/>
    <property type="match status" value="1"/>
</dbReference>
<dbReference type="SMART" id="SM01193">
    <property type="entry name" value="Enolase_N"/>
    <property type="match status" value="1"/>
</dbReference>
<dbReference type="SUPFAM" id="SSF51604">
    <property type="entry name" value="Enolase C-terminal domain-like"/>
    <property type="match status" value="1"/>
</dbReference>
<dbReference type="SUPFAM" id="SSF54826">
    <property type="entry name" value="Enolase N-terminal domain-like"/>
    <property type="match status" value="1"/>
</dbReference>
<dbReference type="PROSITE" id="PS00164">
    <property type="entry name" value="ENOLASE"/>
    <property type="match status" value="1"/>
</dbReference>